<dbReference type="EMBL" id="CP000698">
    <property type="protein sequence ID" value="ABQ24521.1"/>
    <property type="molecule type" value="Genomic_DNA"/>
</dbReference>
<dbReference type="RefSeq" id="WP_011937248.1">
    <property type="nucleotide sequence ID" value="NC_009483.1"/>
</dbReference>
<dbReference type="SMR" id="A5GD28"/>
<dbReference type="STRING" id="351605.Gura_0305"/>
<dbReference type="KEGG" id="gur:Gura_0305"/>
<dbReference type="HOGENOM" id="CLU_095424_4_0_7"/>
<dbReference type="OrthoDB" id="9803474at2"/>
<dbReference type="Proteomes" id="UP000006695">
    <property type="component" value="Chromosome"/>
</dbReference>
<dbReference type="GO" id="GO:0022625">
    <property type="term" value="C:cytosolic large ribosomal subunit"/>
    <property type="evidence" value="ECO:0007669"/>
    <property type="project" value="TreeGrafter"/>
</dbReference>
<dbReference type="GO" id="GO:0003735">
    <property type="term" value="F:structural constituent of ribosome"/>
    <property type="evidence" value="ECO:0007669"/>
    <property type="project" value="InterPro"/>
</dbReference>
<dbReference type="GO" id="GO:0006412">
    <property type="term" value="P:translation"/>
    <property type="evidence" value="ECO:0007669"/>
    <property type="project" value="UniProtKB-UniRule"/>
</dbReference>
<dbReference type="FunFam" id="2.40.50.100:FF:000004">
    <property type="entry name" value="50S ribosomal protein L27"/>
    <property type="match status" value="1"/>
</dbReference>
<dbReference type="Gene3D" id="2.40.50.100">
    <property type="match status" value="1"/>
</dbReference>
<dbReference type="HAMAP" id="MF_00539">
    <property type="entry name" value="Ribosomal_bL27"/>
    <property type="match status" value="1"/>
</dbReference>
<dbReference type="InterPro" id="IPR001684">
    <property type="entry name" value="Ribosomal_bL27"/>
</dbReference>
<dbReference type="NCBIfam" id="TIGR00062">
    <property type="entry name" value="L27"/>
    <property type="match status" value="1"/>
</dbReference>
<dbReference type="PANTHER" id="PTHR15893:SF0">
    <property type="entry name" value="LARGE RIBOSOMAL SUBUNIT PROTEIN BL27M"/>
    <property type="match status" value="1"/>
</dbReference>
<dbReference type="PANTHER" id="PTHR15893">
    <property type="entry name" value="RIBOSOMAL PROTEIN L27"/>
    <property type="match status" value="1"/>
</dbReference>
<dbReference type="Pfam" id="PF01016">
    <property type="entry name" value="Ribosomal_L27"/>
    <property type="match status" value="1"/>
</dbReference>
<dbReference type="PRINTS" id="PR00063">
    <property type="entry name" value="RIBOSOMALL27"/>
</dbReference>
<dbReference type="SUPFAM" id="SSF110324">
    <property type="entry name" value="Ribosomal L27 protein-like"/>
    <property type="match status" value="1"/>
</dbReference>
<evidence type="ECO:0000255" key="1">
    <source>
        <dbReference type="HAMAP-Rule" id="MF_00539"/>
    </source>
</evidence>
<evidence type="ECO:0000256" key="2">
    <source>
        <dbReference type="SAM" id="MobiDB-lite"/>
    </source>
</evidence>
<evidence type="ECO:0000305" key="3"/>
<organism>
    <name type="scientific">Geotalea uraniireducens (strain Rf4)</name>
    <name type="common">Geobacter uraniireducens</name>
    <dbReference type="NCBI Taxonomy" id="351605"/>
    <lineage>
        <taxon>Bacteria</taxon>
        <taxon>Pseudomonadati</taxon>
        <taxon>Thermodesulfobacteriota</taxon>
        <taxon>Desulfuromonadia</taxon>
        <taxon>Geobacterales</taxon>
        <taxon>Geobacteraceae</taxon>
        <taxon>Geotalea</taxon>
    </lineage>
</organism>
<gene>
    <name evidence="1" type="primary">rpmA</name>
    <name type="ordered locus">Gura_0305</name>
</gene>
<proteinExistence type="inferred from homology"/>
<protein>
    <recommendedName>
        <fullName evidence="1">Large ribosomal subunit protein bL27</fullName>
    </recommendedName>
    <alternativeName>
        <fullName evidence="3">50S ribosomal protein L27</fullName>
    </alternativeName>
</protein>
<name>RL27_GEOUR</name>
<feature type="chain" id="PRO_1000081891" description="Large ribosomal subunit protein bL27">
    <location>
        <begin position="1"/>
        <end position="85"/>
    </location>
</feature>
<feature type="region of interest" description="Disordered" evidence="2">
    <location>
        <begin position="1"/>
        <end position="21"/>
    </location>
</feature>
<sequence>MAHKKGVGSTRNGRDSDGQRLGCKKFGGEHVKAGNIIYRQHGTKIHPGNNVGLGRDYTLFALIEGVVKFERMGRDRKKVSVYPAN</sequence>
<reference key="1">
    <citation type="submission" date="2007-05" db="EMBL/GenBank/DDBJ databases">
        <title>Complete sequence of Geobacter uraniireducens Rf4.</title>
        <authorList>
            <consortium name="US DOE Joint Genome Institute"/>
            <person name="Copeland A."/>
            <person name="Lucas S."/>
            <person name="Lapidus A."/>
            <person name="Barry K."/>
            <person name="Detter J.C."/>
            <person name="Glavina del Rio T."/>
            <person name="Hammon N."/>
            <person name="Israni S."/>
            <person name="Dalin E."/>
            <person name="Tice H."/>
            <person name="Pitluck S."/>
            <person name="Chertkov O."/>
            <person name="Brettin T."/>
            <person name="Bruce D."/>
            <person name="Han C."/>
            <person name="Schmutz J."/>
            <person name="Larimer F."/>
            <person name="Land M."/>
            <person name="Hauser L."/>
            <person name="Kyrpides N."/>
            <person name="Mikhailova N."/>
            <person name="Shelobolina E."/>
            <person name="Aklujkar M."/>
            <person name="Lovley D."/>
            <person name="Richardson P."/>
        </authorList>
    </citation>
    <scope>NUCLEOTIDE SEQUENCE [LARGE SCALE GENOMIC DNA]</scope>
    <source>
        <strain>ATCC BAA-1134 / JCM 13001 / Rf4</strain>
    </source>
</reference>
<keyword id="KW-1185">Reference proteome</keyword>
<keyword id="KW-0687">Ribonucleoprotein</keyword>
<keyword id="KW-0689">Ribosomal protein</keyword>
<accession>A5GD28</accession>
<comment type="similarity">
    <text evidence="1">Belongs to the bacterial ribosomal protein bL27 family.</text>
</comment>